<name>NIFN_RHOCA</name>
<keyword id="KW-0479">Metal-binding</keyword>
<keyword id="KW-0535">Nitrogen fixation</keyword>
<protein>
    <recommendedName>
        <fullName>Nitrogenase iron-molybdenum cofactor biosynthesis protein NifN</fullName>
    </recommendedName>
</protein>
<feature type="chain" id="PRO_0000153133" description="Nitrogenase iron-molybdenum cofactor biosynthesis protein NifN">
    <location>
        <begin position="1"/>
        <end position="461"/>
    </location>
</feature>
<feature type="binding site" evidence="1">
    <location>
        <position position="44"/>
    </location>
    <ligand>
        <name>[7Fe-Mo-9S-C-homocitryl] cluster</name>
        <dbReference type="ChEBI" id="CHEBI:30409"/>
        <note>cofactor</note>
    </ligand>
</feature>
<comment type="function">
    <text>This protein may play a role in the biosynthesis of the prosthetic group of nitrogenase (FeMo cofactor).</text>
</comment>
<comment type="pathway">
    <text>Cofactor biosynthesis; Fe-Mo cofactor biosynthesis.</text>
</comment>
<comment type="similarity">
    <text evidence="2">Belongs to the NifD/NifK/NifE/NifN family.</text>
</comment>
<accession>P19077</accession>
<proteinExistence type="inferred from homology"/>
<gene>
    <name type="primary">nifN</name>
</gene>
<dbReference type="EMBL" id="X17433">
    <property type="protein sequence ID" value="CAA35473.1"/>
    <property type="molecule type" value="Genomic_DNA"/>
</dbReference>
<dbReference type="PIR" id="JE0030">
    <property type="entry name" value="JE0030"/>
</dbReference>
<dbReference type="SMR" id="P19077"/>
<dbReference type="UniPathway" id="UPA00782"/>
<dbReference type="GO" id="GO:0046872">
    <property type="term" value="F:metal ion binding"/>
    <property type="evidence" value="ECO:0007669"/>
    <property type="project" value="UniProtKB-KW"/>
</dbReference>
<dbReference type="GO" id="GO:0016163">
    <property type="term" value="F:nitrogenase activity"/>
    <property type="evidence" value="ECO:0007669"/>
    <property type="project" value="InterPro"/>
</dbReference>
<dbReference type="GO" id="GO:0009399">
    <property type="term" value="P:nitrogen fixation"/>
    <property type="evidence" value="ECO:0007669"/>
    <property type="project" value="UniProtKB-KW"/>
</dbReference>
<dbReference type="GO" id="GO:0065003">
    <property type="term" value="P:protein-containing complex assembly"/>
    <property type="evidence" value="ECO:0007669"/>
    <property type="project" value="InterPro"/>
</dbReference>
<dbReference type="CDD" id="cd01966">
    <property type="entry name" value="Nitrogenase_NifN_1"/>
    <property type="match status" value="1"/>
</dbReference>
<dbReference type="Gene3D" id="3.40.50.1980">
    <property type="entry name" value="Nitrogenase molybdenum iron protein domain"/>
    <property type="match status" value="3"/>
</dbReference>
<dbReference type="InterPro" id="IPR050152">
    <property type="entry name" value="ChlB/BchB/BchZ"/>
</dbReference>
<dbReference type="InterPro" id="IPR000510">
    <property type="entry name" value="Nase/OxRdtase_comp1"/>
</dbReference>
<dbReference type="InterPro" id="IPR000318">
    <property type="entry name" value="Nase_comp1_CS"/>
</dbReference>
<dbReference type="InterPro" id="IPR005975">
    <property type="entry name" value="Nase_Mo-Fe_CF"/>
</dbReference>
<dbReference type="NCBIfam" id="TIGR01285">
    <property type="entry name" value="nifN"/>
    <property type="match status" value="1"/>
</dbReference>
<dbReference type="PANTHER" id="PTHR33712">
    <property type="entry name" value="LIGHT-INDEPENDENT PROTOCHLOROPHYLLIDE REDUCTASE SUBUNIT B"/>
    <property type="match status" value="1"/>
</dbReference>
<dbReference type="PANTHER" id="PTHR33712:SF7">
    <property type="entry name" value="LIGHT-INDEPENDENT PROTOCHLOROPHYLLIDE REDUCTASE SUBUNIT B"/>
    <property type="match status" value="1"/>
</dbReference>
<dbReference type="Pfam" id="PF00148">
    <property type="entry name" value="Oxidored_nitro"/>
    <property type="match status" value="1"/>
</dbReference>
<dbReference type="SUPFAM" id="SSF53807">
    <property type="entry name" value="Helical backbone' metal receptor"/>
    <property type="match status" value="1"/>
</dbReference>
<dbReference type="PROSITE" id="PS00699">
    <property type="entry name" value="NITROGENASE_1_1"/>
    <property type="match status" value="1"/>
</dbReference>
<reference key="1">
    <citation type="journal article" date="1989" name="Mol. Gen. Genet.">
        <title>DNA sequence and genetic analysis of the Rhodobacter capsulatus nifENX gene region: homology between NifX and NifB suggests involvement of NifX in processing of the iron-molybdenum cofactor.</title>
        <authorList>
            <person name="Moreno-Vivian C."/>
            <person name="Schmehl M."/>
            <person name="Masepohl B."/>
            <person name="Arnold W."/>
            <person name="Klipp W."/>
        </authorList>
    </citation>
    <scope>NUCLEOTIDE SEQUENCE [GENOMIC DNA]</scope>
</reference>
<evidence type="ECO:0000255" key="1"/>
<evidence type="ECO:0000305" key="2"/>
<sequence>MAVLTHSRRALSTNPLKTSAPLGAAMAYLGIEGAVPLFHGAQGCTAFGVVHLVRHFKEAVPLQTTAMNEVSTILGGGEQIEEAIDNIRKRANPKFIGIASTALTETRGEDIAGELRAMQVRRKDWVGTAVVHVITPDFEGGQQDGWAKAVEAIVAALVPVTAERDPDLRQVTLLVPSCFTTAEIDEAVRMIRAFGLSPIVLPDLSTSLDGHLSDDWSGHSLGGTRLDDIARIPRSAVTLAIGEQMRAAAPMIEDRALVPYRVFQSLTGLKVVDAFVRVLMELSGMQDPPPSTKRDRARMMDAALDAHFFTGGLRVAIGADPDLMFALSTALVSMGAEIVTAVTTTQNSALIEKMPCAEVILGDLGDVERGAGQAEAQILITHSHGRHAAAALHLPLVRAGFPIFDRIGAQDTCRIGYRGTRAFFFEIANAMQAIHHRPRPEDFGAAPIPQEFDHVPHPAPC</sequence>
<organism>
    <name type="scientific">Rhodobacter capsulatus</name>
    <name type="common">Rhodopseudomonas capsulata</name>
    <dbReference type="NCBI Taxonomy" id="1061"/>
    <lineage>
        <taxon>Bacteria</taxon>
        <taxon>Pseudomonadati</taxon>
        <taxon>Pseudomonadota</taxon>
        <taxon>Alphaproteobacteria</taxon>
        <taxon>Rhodobacterales</taxon>
        <taxon>Rhodobacter group</taxon>
        <taxon>Rhodobacter</taxon>
    </lineage>
</organism>